<protein>
    <recommendedName>
        <fullName>Vasodilator-stimulated phosphoprotein</fullName>
        <shortName>VASP</shortName>
    </recommendedName>
</protein>
<reference key="1">
    <citation type="journal article" date="1995" name="EMBO J.">
        <title>Molecular cloning, structural analysis and functional expression of the proline-rich focal adhesion and microfilament-associated protein VASP.</title>
        <authorList>
            <person name="Haffner C."/>
            <person name="Jarchau T."/>
            <person name="Reinhard M."/>
            <person name="Hoppe J."/>
            <person name="Lohmann S.M."/>
            <person name="Walter U."/>
        </authorList>
    </citation>
    <scope>NUCLEOTIDE SEQUENCE [MRNA]</scope>
    <scope>PROTEIN SEQUENCE OF 11-32; 87-96; 140-154; 255-282 AND 297-322</scope>
    <scope>SUBCELLULAR LOCATION</scope>
    <scope>TISSUE SPECIFICITY</scope>
    <scope>POSSIBLE FUNCTION</scope>
    <source>
        <tissue>Promyelocyte</tissue>
    </source>
</reference>
<reference key="2">
    <citation type="journal article" date="1999" name="J. Cell Biol.">
        <title>Role of proteins of the Ena/VASP family in actin-based motility of Listeria monocytogenes.</title>
        <authorList>
            <person name="Laurent V."/>
            <person name="Loisel T.P."/>
            <person name="Harbeck B."/>
            <person name="Wehman A."/>
            <person name="Groebe L."/>
            <person name="Jockusch B.M."/>
            <person name="Wehland J."/>
            <person name="Gertler F.B."/>
            <person name="Carlier M.-F."/>
        </authorList>
    </citation>
    <scope>NUCLEOTIDE SEQUENCE [MRNA]</scope>
    <scope>FUNCTION</scope>
    <scope>INTERACTION WITH L.MONOCYTOGENES ACTA</scope>
</reference>
<reference key="3">
    <citation type="journal article" date="2004" name="Nat. Genet.">
        <title>Complete sequencing and characterization of 21,243 full-length human cDNAs.</title>
        <authorList>
            <person name="Ota T."/>
            <person name="Suzuki Y."/>
            <person name="Nishikawa T."/>
            <person name="Otsuki T."/>
            <person name="Sugiyama T."/>
            <person name="Irie R."/>
            <person name="Wakamatsu A."/>
            <person name="Hayashi K."/>
            <person name="Sato H."/>
            <person name="Nagai K."/>
            <person name="Kimura K."/>
            <person name="Makita H."/>
            <person name="Sekine M."/>
            <person name="Obayashi M."/>
            <person name="Nishi T."/>
            <person name="Shibahara T."/>
            <person name="Tanaka T."/>
            <person name="Ishii S."/>
            <person name="Yamamoto J."/>
            <person name="Saito K."/>
            <person name="Kawai Y."/>
            <person name="Isono Y."/>
            <person name="Nakamura Y."/>
            <person name="Nagahari K."/>
            <person name="Murakami K."/>
            <person name="Yasuda T."/>
            <person name="Iwayanagi T."/>
            <person name="Wagatsuma M."/>
            <person name="Shiratori A."/>
            <person name="Sudo H."/>
            <person name="Hosoiri T."/>
            <person name="Kaku Y."/>
            <person name="Kodaira H."/>
            <person name="Kondo H."/>
            <person name="Sugawara M."/>
            <person name="Takahashi M."/>
            <person name="Kanda K."/>
            <person name="Yokoi T."/>
            <person name="Furuya T."/>
            <person name="Kikkawa E."/>
            <person name="Omura Y."/>
            <person name="Abe K."/>
            <person name="Kamihara K."/>
            <person name="Katsuta N."/>
            <person name="Sato K."/>
            <person name="Tanikawa M."/>
            <person name="Yamazaki M."/>
            <person name="Ninomiya K."/>
            <person name="Ishibashi T."/>
            <person name="Yamashita H."/>
            <person name="Murakawa K."/>
            <person name="Fujimori K."/>
            <person name="Tanai H."/>
            <person name="Kimata M."/>
            <person name="Watanabe M."/>
            <person name="Hiraoka S."/>
            <person name="Chiba Y."/>
            <person name="Ishida S."/>
            <person name="Ono Y."/>
            <person name="Takiguchi S."/>
            <person name="Watanabe S."/>
            <person name="Yosida M."/>
            <person name="Hotuta T."/>
            <person name="Kusano J."/>
            <person name="Kanehori K."/>
            <person name="Takahashi-Fujii A."/>
            <person name="Hara H."/>
            <person name="Tanase T.-O."/>
            <person name="Nomura Y."/>
            <person name="Togiya S."/>
            <person name="Komai F."/>
            <person name="Hara R."/>
            <person name="Takeuchi K."/>
            <person name="Arita M."/>
            <person name="Imose N."/>
            <person name="Musashino K."/>
            <person name="Yuuki H."/>
            <person name="Oshima A."/>
            <person name="Sasaki N."/>
            <person name="Aotsuka S."/>
            <person name="Yoshikawa Y."/>
            <person name="Matsunawa H."/>
            <person name="Ichihara T."/>
            <person name="Shiohata N."/>
            <person name="Sano S."/>
            <person name="Moriya S."/>
            <person name="Momiyama H."/>
            <person name="Satoh N."/>
            <person name="Takami S."/>
            <person name="Terashima Y."/>
            <person name="Suzuki O."/>
            <person name="Nakagawa S."/>
            <person name="Senoh A."/>
            <person name="Mizoguchi H."/>
            <person name="Goto Y."/>
            <person name="Shimizu F."/>
            <person name="Wakebe H."/>
            <person name="Hishigaki H."/>
            <person name="Watanabe T."/>
            <person name="Sugiyama A."/>
            <person name="Takemoto M."/>
            <person name="Kawakami B."/>
            <person name="Yamazaki M."/>
            <person name="Watanabe K."/>
            <person name="Kumagai A."/>
            <person name="Itakura S."/>
            <person name="Fukuzumi Y."/>
            <person name="Fujimori Y."/>
            <person name="Komiyama M."/>
            <person name="Tashiro H."/>
            <person name="Tanigami A."/>
            <person name="Fujiwara T."/>
            <person name="Ono T."/>
            <person name="Yamada K."/>
            <person name="Fujii Y."/>
            <person name="Ozaki K."/>
            <person name="Hirao M."/>
            <person name="Ohmori Y."/>
            <person name="Kawabata A."/>
            <person name="Hikiji T."/>
            <person name="Kobatake N."/>
            <person name="Inagaki H."/>
            <person name="Ikema Y."/>
            <person name="Okamoto S."/>
            <person name="Okitani R."/>
            <person name="Kawakami T."/>
            <person name="Noguchi S."/>
            <person name="Itoh T."/>
            <person name="Shigeta K."/>
            <person name="Senba T."/>
            <person name="Matsumura K."/>
            <person name="Nakajima Y."/>
            <person name="Mizuno T."/>
            <person name="Morinaga M."/>
            <person name="Sasaki M."/>
            <person name="Togashi T."/>
            <person name="Oyama M."/>
            <person name="Hata H."/>
            <person name="Watanabe M."/>
            <person name="Komatsu T."/>
            <person name="Mizushima-Sugano J."/>
            <person name="Satoh T."/>
            <person name="Shirai Y."/>
            <person name="Takahashi Y."/>
            <person name="Nakagawa K."/>
            <person name="Okumura K."/>
            <person name="Nagase T."/>
            <person name="Nomura N."/>
            <person name="Kikuchi H."/>
            <person name="Masuho Y."/>
            <person name="Yamashita R."/>
            <person name="Nakai K."/>
            <person name="Yada T."/>
            <person name="Nakamura Y."/>
            <person name="Ohara O."/>
            <person name="Isogai T."/>
            <person name="Sugano S."/>
        </authorList>
    </citation>
    <scope>NUCLEOTIDE SEQUENCE [LARGE SCALE MRNA]</scope>
    <source>
        <tissue>Substantia nigra</tissue>
    </source>
</reference>
<reference key="4">
    <citation type="submission" date="2005-07" db="EMBL/GenBank/DDBJ databases">
        <authorList>
            <person name="Mural R.J."/>
            <person name="Istrail S."/>
            <person name="Sutton G.G."/>
            <person name="Florea L."/>
            <person name="Halpern A.L."/>
            <person name="Mobarry C.M."/>
            <person name="Lippert R."/>
            <person name="Walenz B."/>
            <person name="Shatkay H."/>
            <person name="Dew I."/>
            <person name="Miller J.R."/>
            <person name="Flanigan M.J."/>
            <person name="Edwards N.J."/>
            <person name="Bolanos R."/>
            <person name="Fasulo D."/>
            <person name="Halldorsson B.V."/>
            <person name="Hannenhalli S."/>
            <person name="Turner R."/>
            <person name="Yooseph S."/>
            <person name="Lu F."/>
            <person name="Nusskern D.R."/>
            <person name="Shue B.C."/>
            <person name="Zheng X.H."/>
            <person name="Zhong F."/>
            <person name="Delcher A.L."/>
            <person name="Huson D.H."/>
            <person name="Kravitz S.A."/>
            <person name="Mouchard L."/>
            <person name="Reinert K."/>
            <person name="Remington K.A."/>
            <person name="Clark A.G."/>
            <person name="Waterman M.S."/>
            <person name="Eichler E.E."/>
            <person name="Adams M.D."/>
            <person name="Hunkapiller M.W."/>
            <person name="Myers E.W."/>
            <person name="Venter J.C."/>
        </authorList>
    </citation>
    <scope>NUCLEOTIDE SEQUENCE [LARGE SCALE GENOMIC DNA]</scope>
</reference>
<reference key="5">
    <citation type="journal article" date="2004" name="Genome Res.">
        <title>The status, quality, and expansion of the NIH full-length cDNA project: the Mammalian Gene Collection (MGC).</title>
        <authorList>
            <consortium name="The MGC Project Team"/>
        </authorList>
    </citation>
    <scope>NUCLEOTIDE SEQUENCE [LARGE SCALE MRNA]</scope>
    <source>
        <tissue>Fetal lung</tissue>
        <tissue>Fetal spleen</tissue>
        <tissue>Skin</tissue>
    </source>
</reference>
<reference key="6">
    <citation type="journal article" date="2003" name="Nat. Biotechnol.">
        <title>Exploring proteomes and analyzing protein processing by mass spectrometric identification of sorted N-terminal peptides.</title>
        <authorList>
            <person name="Gevaert K."/>
            <person name="Goethals M."/>
            <person name="Martens L."/>
            <person name="Van Damme J."/>
            <person name="Staes A."/>
            <person name="Thomas G.R."/>
            <person name="Vandekerckhove J."/>
        </authorList>
    </citation>
    <scope>PROTEIN SEQUENCE OF 2-10</scope>
    <scope>ACETYLATION AT SER-2</scope>
    <source>
        <tissue>Platelet</tissue>
    </source>
</reference>
<reference key="7">
    <citation type="journal article" date="1996" name="Genomics">
        <title>Cloning of the VASP (vasodilator-stimulated phosphoprotein) genes in human and mouse: structure, sequence, and chromosomal localization.</title>
        <authorList>
            <person name="Zimmer M."/>
            <person name="Fink T."/>
            <person name="Fischer L."/>
            <person name="Hauser W."/>
            <person name="Scherer K."/>
            <person name="Lichter P."/>
            <person name="Walter U."/>
        </authorList>
    </citation>
    <scope>NUCLEOTIDE SEQUENCE [GENOMIC DNA] OF 3-380</scope>
</reference>
<reference key="8">
    <citation type="journal article" date="1994" name="J. Biol. Chem.">
        <title>cAMP- and cGMP-dependent protein kinase phosphorylation sites of the focal adhesion vasodilator-stimulated phosphoprotein (VASP) in vitro and in intact human platelets.</title>
        <authorList>
            <person name="Butt E."/>
            <person name="Abel K."/>
            <person name="Krieger M."/>
            <person name="Palm D."/>
            <person name="Hoppe V."/>
            <person name="Hoppe J."/>
            <person name="Walter U."/>
        </authorList>
    </citation>
    <scope>PROTEIN SEQUENCE OF 143-164; 235-244 AND 267-285</scope>
    <scope>PHOSPHORYLATION AT SER-157; SER-239 AND THR-278 BY PRKG1</scope>
</reference>
<reference key="9">
    <citation type="journal article" date="1994" name="Eur. J. Biochem.">
        <title>Phosphorylation of focal adhesion vasodilator-stimulated phosphoprotein at Ser157 in intact human platelets correlates with fibrinogen receptor inhibition.</title>
        <authorList>
            <person name="Horstrup K."/>
            <person name="Jablonka B."/>
            <person name="Honig-Liedl P."/>
            <person name="Just M."/>
            <person name="Kochsiek K."/>
            <person name="Walter U."/>
        </authorList>
    </citation>
    <scope>PHOSPHORYLATION AT SER-157</scope>
    <scope>FIBRINOGEN RECEPTOR INHIBITION</scope>
</reference>
<reference key="10">
    <citation type="journal article" date="1995" name="EMBO J.">
        <title>The proline-rich focal adhesion and microfilament protein VASP is a ligand for profilins.</title>
        <authorList>
            <person name="Reinhard M."/>
            <person name="Giehl K."/>
            <person name="Abel K."/>
            <person name="Haffner C."/>
            <person name="Jarchau T."/>
            <person name="Hoppe V."/>
            <person name="Jockusch B.M."/>
            <person name="Walter U."/>
        </authorList>
    </citation>
    <scope>INTERACTION WITH ACTG1 AND PFN1</scope>
</reference>
<reference key="11">
    <citation type="journal article" date="1999" name="J. Biol. Chem.">
        <title>The EVH2 domain of the vasodilator-stimulated phosphoprotein mediates tetramerization, F-actin binding, and actin bundle formation.</title>
        <authorList>
            <person name="Bachmann C."/>
            <person name="Fischer L."/>
            <person name="Walter U."/>
            <person name="Reinhard M."/>
        </authorList>
    </citation>
    <scope>FUNCTION OF EVH2 DOMAIN</scope>
</reference>
<reference key="12">
    <citation type="journal article" date="2000" name="J. Biol. Chem.">
        <title>Characterization of the interaction between zyxin and members of the Ena/vasodilator-stimulated phosphoprotein family of proteins.</title>
        <authorList>
            <person name="Drees B."/>
            <person name="Friederich E."/>
            <person name="Fradelizi J."/>
            <person name="Louvard D."/>
            <person name="Beckerle M.C."/>
            <person name="Golsteyn R.M."/>
        </authorList>
    </citation>
    <scope>INTERACTION WITH ZYX</scope>
</reference>
<reference key="13">
    <citation type="journal article" date="2000" name="Mol. Biol. Cell">
        <title>LPP, an actin cytoskeleton protein related to zyxin, harbors a nuclear export signal and transcriptional activation capacity.</title>
        <authorList>
            <person name="Petit M.M."/>
            <person name="Fradelizi J."/>
            <person name="Golsteyn R.M."/>
            <person name="Ayoubi T.A."/>
            <person name="Menichi B."/>
            <person name="Louvard D."/>
            <person name="Van de Ven W.J.M."/>
            <person name="Friederich E."/>
        </authorList>
    </citation>
    <scope>INTERACTION WITH LPP</scope>
</reference>
<reference key="14">
    <citation type="journal article" date="2004" name="Dev. Cell">
        <title>Lamellipodin, an Ena/VASP ligand, is implicated in the regulation of lamellipodial dynamics.</title>
        <authorList>
            <person name="Krause M."/>
            <person name="Leslie J.D."/>
            <person name="Stewart M."/>
            <person name="Lafuente E.M."/>
            <person name="Valderrama F."/>
            <person name="Jagannathan R."/>
            <person name="Strasser G.A."/>
            <person name="Rubinson D.A."/>
            <person name="Liu H."/>
            <person name="Way M."/>
            <person name="Yaffe M.B."/>
            <person name="Boussiotis V.A."/>
            <person name="Gertler F.B."/>
        </authorList>
    </citation>
    <scope>INTERACTION WITH RAPH1</scope>
</reference>
<reference key="15">
    <citation type="journal article" date="2004" name="FEBS Lett.">
        <title>Vasodilator-stimulated phosphoprotein is a substrate for protein kinase C.</title>
        <authorList>
            <person name="Chitaley K."/>
            <person name="Chen L."/>
            <person name="Galler A."/>
            <person name="Walter U."/>
            <person name="Daum G."/>
            <person name="Clowes A.W."/>
        </authorList>
    </citation>
    <scope>PHOSPHORYLATION BY PKC</scope>
</reference>
<reference key="16">
    <citation type="journal article" date="2005" name="J. Biol. Chem.">
        <title>Ena/VASP proteins enhance actin polymerization in the presence of barbed end capping proteins.</title>
        <authorList>
            <person name="Barzik M."/>
            <person name="Kotova T.I."/>
            <person name="Higgs H.N."/>
            <person name="Hazelwood L."/>
            <person name="Hanein D."/>
            <person name="Gertler F.B."/>
            <person name="Schafer D.A."/>
        </authorList>
    </citation>
    <scope>FUNCTION</scope>
    <scope>LACK OF ACTIN NUCLEATION ACTIVITY</scope>
    <scope>FUNCTION IN ACTIN FILAMENT ELONGATION</scope>
</reference>
<reference key="17">
    <citation type="journal article" date="2005" name="Nat. Biotechnol.">
        <title>Immunoaffinity profiling of tyrosine phosphorylation in cancer cells.</title>
        <authorList>
            <person name="Rush J."/>
            <person name="Moritz A."/>
            <person name="Lee K.A."/>
            <person name="Guo A."/>
            <person name="Goss V.L."/>
            <person name="Spek E.J."/>
            <person name="Zhang H."/>
            <person name="Zha X.-M."/>
            <person name="Polakiewicz R.D."/>
            <person name="Comb M.J."/>
        </authorList>
    </citation>
    <scope>PHOSPHORYLATION [LARGE SCALE ANALYSIS] AT TYR-39</scope>
    <scope>IDENTIFICATION BY MASS SPECTROMETRY [LARGE SCALE ANALYSIS]</scope>
</reference>
<reference key="18">
    <citation type="journal article" date="2006" name="Biochem. J.">
        <title>Vasodilator-stimulated phosphoprotein (VASP) is phosphorylated on Ser 157 by protein kinase C-dependent and -independent mechanisms in thrombin-stimulated human platelets.</title>
        <authorList>
            <person name="Wentworth J.K."/>
            <person name="Pula G."/>
            <person name="Poole A.W."/>
        </authorList>
    </citation>
    <scope>PHOSPHORYLATION AT SER-157</scope>
    <scope>SUBCELLULAR LOCATION</scope>
</reference>
<reference key="19">
    <citation type="journal article" date="2006" name="Exp. Cell Res.">
        <title>Unusual splicing events result in distinct Xin isoforms that associate differentially with filamin c and Mena/VASP.</title>
        <authorList>
            <person name="van der Ven P.F.M."/>
            <person name="Ehler E."/>
            <person name="Vakeel P."/>
            <person name="Eulitz S."/>
            <person name="Schenk J.A."/>
            <person name="Milting H."/>
            <person name="Micheel B."/>
            <person name="Fuerst D.O."/>
        </authorList>
    </citation>
    <scope>INTERACTION WITH XIRP1</scope>
</reference>
<reference key="20">
    <citation type="journal article" date="2007" name="J. Biol. Chem.">
        <title>AMP-activated protein kinase impairs endothelial actin cytoskeleton assembly by phosphorylating vasodilator-stimulated phosphoprotein.</title>
        <authorList>
            <person name="Blume C."/>
            <person name="Benz P.M."/>
            <person name="Walter U."/>
            <person name="Ha J."/>
            <person name="Kemp B.E."/>
            <person name="Renne T."/>
        </authorList>
    </citation>
    <scope>PHOSPHORYLATION AT THR-278</scope>
    <scope>MUTAGENESIS OF SER-157; SER-239 AND THR-278</scope>
    <scope>FUNCTION</scope>
</reference>
<reference key="21">
    <citation type="journal article" date="2008" name="Diabetes">
        <title>Carbon monoxide and nitric oxide mediate cytoskeletal reorganization in microvascular cells via vasodilator-stimulated phosphoprotein phosphorylation: evidence for blunted responsiveness in diabetes.</title>
        <authorList>
            <person name="Li Calzi S."/>
            <person name="Purich D.L."/>
            <person name="Chang K.H."/>
            <person name="Afzal A."/>
            <person name="Nakagawa T."/>
            <person name="Busik J.V."/>
            <person name="Agarwal A."/>
            <person name="Segal M.S."/>
            <person name="Grant M.B."/>
        </authorList>
    </citation>
    <scope>FUNCTION</scope>
    <scope>SUBCELLULAR LOCATION</scope>
    <scope>PHOSPHORYLATION AT SER-157 AND SER-239</scope>
</reference>
<reference key="22">
    <citation type="journal article" date="2008" name="J. Proteome Res.">
        <title>Phosphoproteome of resting human platelets.</title>
        <authorList>
            <person name="Zahedi R.P."/>
            <person name="Lewandrowski U."/>
            <person name="Wiesner J."/>
            <person name="Wortelkamp S."/>
            <person name="Moebius J."/>
            <person name="Schuetz C."/>
            <person name="Walter U."/>
            <person name="Gambaryan S."/>
            <person name="Sickmann A."/>
        </authorList>
    </citation>
    <scope>IDENTIFICATION BY MASS SPECTROMETRY [LARGE SCALE ANALYSIS]</scope>
    <source>
        <tissue>Platelet</tissue>
    </source>
</reference>
<reference key="23">
    <citation type="journal article" date="2008" name="Proc. Natl. Acad. Sci. U.S.A.">
        <title>A quantitative atlas of mitotic phosphorylation.</title>
        <authorList>
            <person name="Dephoure N."/>
            <person name="Zhou C."/>
            <person name="Villen J."/>
            <person name="Beausoleil S.A."/>
            <person name="Bakalarski C.E."/>
            <person name="Elledge S.J."/>
            <person name="Gygi S.P."/>
        </authorList>
    </citation>
    <scope>PHOSPHORYLATION [LARGE SCALE ANALYSIS] AT THR-316 AND SER-322</scope>
    <scope>IDENTIFICATION BY MASS SPECTROMETRY [LARGE SCALE ANALYSIS]</scope>
    <source>
        <tissue>Cervix carcinoma</tissue>
    </source>
</reference>
<reference key="24">
    <citation type="journal article" date="2009" name="Anal. Chem.">
        <title>Lys-N and trypsin cover complementary parts of the phosphoproteome in a refined SCX-based approach.</title>
        <authorList>
            <person name="Gauci S."/>
            <person name="Helbig A.O."/>
            <person name="Slijper M."/>
            <person name="Krijgsveld J."/>
            <person name="Heck A.J."/>
            <person name="Mohammed S."/>
        </authorList>
    </citation>
    <scope>ACETYLATION [LARGE SCALE ANALYSIS] AT SER-2</scope>
    <scope>CLEAVAGE OF INITIATOR METHIONINE [LARGE SCALE ANALYSIS]</scope>
    <scope>IDENTIFICATION BY MASS SPECTROMETRY [LARGE SCALE ANALYSIS]</scope>
</reference>
<reference key="25">
    <citation type="journal article" date="2009" name="Exp. Biol. Med. (Maywood)">
        <title>Pyrin and ASC co-localize to cellular sites that are rich in polymerizing actin.</title>
        <authorList>
            <person name="Waite A.L."/>
            <person name="Schaner P."/>
            <person name="Hu C."/>
            <person name="Richards N."/>
            <person name="Balci-Peynircioglu B."/>
            <person name="Hong A."/>
            <person name="Fox M."/>
            <person name="Gumucio D.L."/>
        </authorList>
    </citation>
    <scope>SUBCELLULAR LOCATION</scope>
    <scope>INTERACTION WITH MEFV</scope>
</reference>
<reference key="26">
    <citation type="journal article" date="2009" name="Sci. Signal.">
        <title>Quantitative phosphoproteomic analysis of T cell receptor signaling reveals system-wide modulation of protein-protein interactions.</title>
        <authorList>
            <person name="Mayya V."/>
            <person name="Lundgren D.H."/>
            <person name="Hwang S.-I."/>
            <person name="Rezaul K."/>
            <person name="Wu L."/>
            <person name="Eng J.K."/>
            <person name="Rodionov V."/>
            <person name="Han D.K."/>
        </authorList>
    </citation>
    <scope>IDENTIFICATION BY MASS SPECTROMETRY [LARGE SCALE ANALYSIS]</scope>
    <source>
        <tissue>Leukemic T-cell</tissue>
    </source>
</reference>
<reference key="27">
    <citation type="journal article" date="2009" name="Science">
        <title>Lysine acetylation targets protein complexes and co-regulates major cellular functions.</title>
        <authorList>
            <person name="Choudhary C."/>
            <person name="Kumar C."/>
            <person name="Gnad F."/>
            <person name="Nielsen M.L."/>
            <person name="Rehman M."/>
            <person name="Walther T.C."/>
            <person name="Olsen J.V."/>
            <person name="Mann M."/>
        </authorList>
    </citation>
    <scope>ACETYLATION [LARGE SCALE ANALYSIS] AT LYS-283</scope>
    <scope>IDENTIFICATION BY MASS SPECTROMETRY [LARGE SCALE ANALYSIS]</scope>
</reference>
<reference key="28">
    <citation type="journal article" date="2010" name="Sci. Signal.">
        <title>Quantitative phosphoproteomics reveals widespread full phosphorylation site occupancy during mitosis.</title>
        <authorList>
            <person name="Olsen J.V."/>
            <person name="Vermeulen M."/>
            <person name="Santamaria A."/>
            <person name="Kumar C."/>
            <person name="Miller M.L."/>
            <person name="Jensen L.J."/>
            <person name="Gnad F."/>
            <person name="Cox J."/>
            <person name="Jensen T.S."/>
            <person name="Nigg E.A."/>
            <person name="Brunak S."/>
            <person name="Mann M."/>
        </authorList>
    </citation>
    <scope>PHOSPHORYLATION [LARGE SCALE ANALYSIS] AT THR-316</scope>
    <scope>IDENTIFICATION BY MASS SPECTROMETRY [LARGE SCALE ANALYSIS]</scope>
    <source>
        <tissue>Cervix carcinoma</tissue>
    </source>
</reference>
<reference key="29">
    <citation type="journal article" date="2011" name="BMC Syst. Biol.">
        <title>Initial characterization of the human central proteome.</title>
        <authorList>
            <person name="Burkard T.R."/>
            <person name="Planyavsky M."/>
            <person name="Kaupe I."/>
            <person name="Breitwieser F.P."/>
            <person name="Buerckstuemmer T."/>
            <person name="Bennett K.L."/>
            <person name="Superti-Furga G."/>
            <person name="Colinge J."/>
        </authorList>
    </citation>
    <scope>IDENTIFICATION BY MASS SPECTROMETRY [LARGE SCALE ANALYSIS]</scope>
</reference>
<reference key="30">
    <citation type="journal article" date="2011" name="Sci. Signal.">
        <title>System-wide temporal characterization of the proteome and phosphoproteome of human embryonic stem cell differentiation.</title>
        <authorList>
            <person name="Rigbolt K.T."/>
            <person name="Prokhorova T.A."/>
            <person name="Akimov V."/>
            <person name="Henningsen J."/>
            <person name="Johansen P.T."/>
            <person name="Kratchmarova I."/>
            <person name="Kassem M."/>
            <person name="Mann M."/>
            <person name="Olsen J.V."/>
            <person name="Blagoev B."/>
        </authorList>
    </citation>
    <scope>IDENTIFICATION BY MASS SPECTROMETRY [LARGE SCALE ANALYSIS]</scope>
</reference>
<reference key="31">
    <citation type="journal article" date="2012" name="Mol. Cell. Proteomics">
        <title>Comparative large-scale characterisation of plant vs. mammal proteins reveals similar and idiosyncratic N-alpha acetylation features.</title>
        <authorList>
            <person name="Bienvenut W.V."/>
            <person name="Sumpton D."/>
            <person name="Martinez A."/>
            <person name="Lilla S."/>
            <person name="Espagne C."/>
            <person name="Meinnel T."/>
            <person name="Giglione C."/>
        </authorList>
    </citation>
    <scope>ACETYLATION [LARGE SCALE ANALYSIS] AT SER-2</scope>
    <scope>CLEAVAGE OF INITIATOR METHIONINE [LARGE SCALE ANALYSIS]</scope>
    <scope>IDENTIFICATION BY MASS SPECTROMETRY [LARGE SCALE ANALYSIS]</scope>
</reference>
<reference key="32">
    <citation type="journal article" date="2012" name="Proc. Natl. Acad. Sci. U.S.A.">
        <title>N-terminal acetylome analyses and functional insights of the N-terminal acetyltransferase NatB.</title>
        <authorList>
            <person name="Van Damme P."/>
            <person name="Lasa M."/>
            <person name="Polevoda B."/>
            <person name="Gazquez C."/>
            <person name="Elosegui-Artola A."/>
            <person name="Kim D.S."/>
            <person name="De Juan-Pardo E."/>
            <person name="Demeyer K."/>
            <person name="Hole K."/>
            <person name="Larrea E."/>
            <person name="Timmerman E."/>
            <person name="Prieto J."/>
            <person name="Arnesen T."/>
            <person name="Sherman F."/>
            <person name="Gevaert K."/>
            <person name="Aldabe R."/>
        </authorList>
    </citation>
    <scope>ACETYLATION [LARGE SCALE ANALYSIS] AT SER-2</scope>
    <scope>CLEAVAGE OF INITIATOR METHIONINE [LARGE SCALE ANALYSIS]</scope>
    <scope>IDENTIFICATION BY MASS SPECTROMETRY [LARGE SCALE ANALYSIS]</scope>
</reference>
<reference key="33">
    <citation type="journal article" date="2013" name="J. Proteome Res.">
        <title>Toward a comprehensive characterization of a human cancer cell phosphoproteome.</title>
        <authorList>
            <person name="Zhou H."/>
            <person name="Di Palma S."/>
            <person name="Preisinger C."/>
            <person name="Peng M."/>
            <person name="Polat A.N."/>
            <person name="Heck A.J."/>
            <person name="Mohammed S."/>
        </authorList>
    </citation>
    <scope>PHOSPHORYLATION [LARGE SCALE ANALYSIS] AT TYR-39; SER-46; SER-239; THR-284; SER-305 AND SER-314</scope>
    <scope>IDENTIFICATION BY MASS SPECTROMETRY [LARGE SCALE ANALYSIS]</scope>
    <source>
        <tissue>Cervix carcinoma</tissue>
        <tissue>Erythroleukemia</tissue>
    </source>
</reference>
<reference key="34">
    <citation type="journal article" date="2014" name="J. Proteomics">
        <title>An enzyme assisted RP-RPLC approach for in-depth analysis of human liver phosphoproteome.</title>
        <authorList>
            <person name="Bian Y."/>
            <person name="Song C."/>
            <person name="Cheng K."/>
            <person name="Dong M."/>
            <person name="Wang F."/>
            <person name="Huang J."/>
            <person name="Sun D."/>
            <person name="Wang L."/>
            <person name="Ye M."/>
            <person name="Zou H."/>
        </authorList>
    </citation>
    <scope>IDENTIFICATION BY MASS SPECTROMETRY [LARGE SCALE ANALYSIS]</scope>
    <source>
        <tissue>Liver</tissue>
    </source>
</reference>
<reference key="35">
    <citation type="journal article" date="2015" name="Proteomics">
        <title>N-terminome analysis of the human mitochondrial proteome.</title>
        <authorList>
            <person name="Vaca Jacome A.S."/>
            <person name="Rabilloud T."/>
            <person name="Schaeffer-Reiss C."/>
            <person name="Rompais M."/>
            <person name="Ayoub D."/>
            <person name="Lane L."/>
            <person name="Bairoch A."/>
            <person name="Van Dorsselaer A."/>
            <person name="Carapito C."/>
        </authorList>
    </citation>
    <scope>IDENTIFICATION BY MASS SPECTROMETRY [LARGE SCALE ANALYSIS]</scope>
</reference>
<reference key="36">
    <citation type="journal article" date="2000" name="EMBO J.">
        <title>Dual epitope recognition by the VASP EVH1 domain modulates polyproline ligand specificity and binding affinity.</title>
        <authorList>
            <person name="Ball L.J."/>
            <person name="Kuehne R."/>
            <person name="Hoffmann B."/>
            <person name="Haefner A."/>
            <person name="Schmieder P."/>
            <person name="Volkmer-Engert R."/>
            <person name="Hof M."/>
            <person name="Wahl M."/>
            <person name="Schneider-Mergener J."/>
            <person name="Walter U."/>
            <person name="Oschkinat H."/>
            <person name="Jarchau T."/>
        </authorList>
    </citation>
    <scope>STRUCTURE BY NMR OF 1-115</scope>
</reference>
<reference key="37">
    <citation type="journal article" date="2004" name="Proc. Natl. Acad. Sci. U.S.A.">
        <title>The VASP tetramerization domain is a right-handed coiled coil based on a 15-residue repeat.</title>
        <authorList>
            <person name="Kuehnel K."/>
            <person name="Jarchau T."/>
            <person name="Wolf E."/>
            <person name="Schlichting I."/>
            <person name="Walter U."/>
            <person name="Wittinghofer A."/>
            <person name="Strelkov S.V."/>
        </authorList>
    </citation>
    <scope>X-RAY CRYSTALLOGRAPHY (1.3 ANGSTROMS) OF 336-380</scope>
    <scope>TETRAMERIZATION</scope>
    <scope>MUTAGENESIS OF PHE-370</scope>
</reference>
<reference key="38">
    <citation type="journal article" date="2007" name="EMBO J.">
        <title>Structural basis for the recruitment of profilin-actin complexes during filament elongation by Ena/VASP.</title>
        <authorList>
            <person name="Ferron F."/>
            <person name="Rebowski G."/>
            <person name="Lee S.H."/>
            <person name="Dominguez R."/>
        </authorList>
    </citation>
    <scope>X-RAY CRYSTALLOGRAPHY (1.5 ANGSTROMS) OF 203-245 IN COMPLEXES WITH PFN1 AND ACTIN</scope>
    <scope>INTERACTION WITH PFN1 AND MONOMERIC ACTIN</scope>
</reference>
<reference key="39">
    <citation type="journal article" date="2008" name="Proc. Natl. Acad. Sci. U.S.A.">
        <title>Modulation of actin structure and function by phosphorylation of Tyr-53 and profilin binding.</title>
        <authorList>
            <person name="Baek K."/>
            <person name="Liu X."/>
            <person name="Ferron F."/>
            <person name="Shu S."/>
            <person name="Korn E.D."/>
            <person name="Dominguez R."/>
        </authorList>
    </citation>
    <scope>X-RAY CRYSTALLOGRAPHY (2.3 ANGSTROMS) OF 199-214 IN COMPLEX WITH PFN1 AND ACTIN</scope>
</reference>
<proteinExistence type="evidence at protein level"/>
<evidence type="ECO:0000250" key="1"/>
<evidence type="ECO:0000250" key="2">
    <source>
        <dbReference type="UniProtKB" id="P70460"/>
    </source>
</evidence>
<evidence type="ECO:0000255" key="3"/>
<evidence type="ECO:0000255" key="4">
    <source>
        <dbReference type="PROSITE-ProRule" id="PRU00410"/>
    </source>
</evidence>
<evidence type="ECO:0000256" key="5">
    <source>
        <dbReference type="SAM" id="MobiDB-lite"/>
    </source>
</evidence>
<evidence type="ECO:0000269" key="6">
    <source>
    </source>
</evidence>
<evidence type="ECO:0000269" key="7">
    <source>
    </source>
</evidence>
<evidence type="ECO:0000269" key="8">
    <source>
    </source>
</evidence>
<evidence type="ECO:0000269" key="9">
    <source>
    </source>
</evidence>
<evidence type="ECO:0000269" key="10">
    <source>
    </source>
</evidence>
<evidence type="ECO:0000269" key="11">
    <source>
    </source>
</evidence>
<evidence type="ECO:0000269" key="12">
    <source>
    </source>
</evidence>
<evidence type="ECO:0000269" key="13">
    <source>
    </source>
</evidence>
<evidence type="ECO:0000269" key="14">
    <source>
    </source>
</evidence>
<evidence type="ECO:0000269" key="15">
    <source>
    </source>
</evidence>
<evidence type="ECO:0000269" key="16">
    <source>
    </source>
</evidence>
<evidence type="ECO:0000269" key="17">
    <source>
    </source>
</evidence>
<evidence type="ECO:0000269" key="18">
    <source>
    </source>
</evidence>
<evidence type="ECO:0000269" key="19">
    <source>
    </source>
</evidence>
<evidence type="ECO:0000269" key="20">
    <source>
    </source>
</evidence>
<evidence type="ECO:0000269" key="21">
    <source>
    </source>
</evidence>
<evidence type="ECO:0000269" key="22">
    <source>
    </source>
</evidence>
<evidence type="ECO:0000269" key="23">
    <source>
    </source>
</evidence>
<evidence type="ECO:0000269" key="24">
    <source>
    </source>
</evidence>
<evidence type="ECO:0000269" key="25">
    <source>
    </source>
</evidence>
<evidence type="ECO:0000305" key="26"/>
<evidence type="ECO:0007744" key="27">
    <source>
    </source>
</evidence>
<evidence type="ECO:0007744" key="28">
    <source>
    </source>
</evidence>
<evidence type="ECO:0007744" key="29">
    <source>
    </source>
</evidence>
<evidence type="ECO:0007744" key="30">
    <source>
    </source>
</evidence>
<evidence type="ECO:0007744" key="31">
    <source>
    </source>
</evidence>
<evidence type="ECO:0007744" key="32">
    <source>
    </source>
</evidence>
<evidence type="ECO:0007744" key="33">
    <source>
    </source>
</evidence>
<evidence type="ECO:0007744" key="34">
    <source>
    </source>
</evidence>
<evidence type="ECO:0007829" key="35">
    <source>
        <dbReference type="PDB" id="1EGX"/>
    </source>
</evidence>
<evidence type="ECO:0007829" key="36">
    <source>
        <dbReference type="PDB" id="1USE"/>
    </source>
</evidence>
<evidence type="ECO:0007829" key="37">
    <source>
        <dbReference type="PDB" id="2PBD"/>
    </source>
</evidence>
<feature type="initiator methionine" description="Removed" evidence="10 29 32 33">
    <location>
        <position position="1"/>
    </location>
</feature>
<feature type="chain" id="PRO_0000065767" description="Vasodilator-stimulated phosphoprotein">
    <location>
        <begin position="2"/>
        <end position="380"/>
    </location>
</feature>
<feature type="domain" description="WH1" evidence="4">
    <location>
        <begin position="2"/>
        <end position="113"/>
    </location>
</feature>
<feature type="repeat" description="1">
    <location>
        <begin position="344"/>
        <end position="358"/>
    </location>
</feature>
<feature type="repeat" description="2">
    <location>
        <begin position="359"/>
        <end position="373"/>
    </location>
</feature>
<feature type="region of interest" description="Disordered" evidence="5">
    <location>
        <begin position="111"/>
        <end position="343"/>
    </location>
</feature>
<feature type="region of interest" description="EVH2">
    <location>
        <begin position="225"/>
        <end position="377"/>
    </location>
</feature>
<feature type="region of interest" description="EVH2 block A">
    <location>
        <begin position="225"/>
        <end position="245"/>
    </location>
</feature>
<feature type="region of interest" description="EVH2 block B">
    <location>
        <begin position="259"/>
        <end position="278"/>
    </location>
</feature>
<feature type="region of interest" description="EVH2 block C">
    <location>
        <begin position="343"/>
        <end position="377"/>
    </location>
</feature>
<feature type="region of interest" description="2 X 15 AA tandem repeats of L-[EQ]-[KR]-[MV]-K-[EQ]-E-[IL]-[IL]-E-[AEV]-[FV]-[KRV]-[KQ]-E">
    <location>
        <begin position="344"/>
        <end position="373"/>
    </location>
</feature>
<feature type="coiled-coil region" evidence="3">
    <location>
        <begin position="337"/>
        <end position="373"/>
    </location>
</feature>
<feature type="short sequence motif" description="KLKR">
    <location>
        <begin position="234"/>
        <end position="237"/>
    </location>
</feature>
<feature type="compositionally biased region" description="Pro residues" evidence="5">
    <location>
        <begin position="162"/>
        <end position="192"/>
    </location>
</feature>
<feature type="compositionally biased region" description="Low complexity" evidence="5">
    <location>
        <begin position="224"/>
        <end position="233"/>
    </location>
</feature>
<feature type="compositionally biased region" description="Polar residues" evidence="5">
    <location>
        <begin position="312"/>
        <end position="342"/>
    </location>
</feature>
<feature type="modified residue" description="N-acetylserine" evidence="10 29 32 33">
    <location>
        <position position="2"/>
    </location>
</feature>
<feature type="modified residue" description="Phosphotyrosine" evidence="27 34">
    <location>
        <position position="39"/>
    </location>
</feature>
<feature type="modified residue" description="Phosphoserine" evidence="34">
    <location>
        <position position="46"/>
    </location>
</feature>
<feature type="modified residue" description="Phosphoserine; by PKA, PKC, PKG/PRKG1 and ROCK1" evidence="15 19 24 25">
    <location>
        <position position="157"/>
    </location>
</feature>
<feature type="modified residue" description="Phosphoserine; by PKA and PKG/PRKG1" evidence="19 25 34">
    <location>
        <position position="239"/>
    </location>
</feature>
<feature type="modified residue" description="Phosphothreonine; by PKA, PKG/PRKG1 and AMPK" evidence="17 25">
    <location>
        <position position="278"/>
    </location>
</feature>
<feature type="modified residue" description="N6-acetyllysine" evidence="30">
    <location>
        <position position="283"/>
    </location>
</feature>
<feature type="modified residue" description="Phosphothreonine" evidence="34">
    <location>
        <position position="284"/>
    </location>
</feature>
<feature type="modified residue" description="Phosphoserine" evidence="34">
    <location>
        <position position="305"/>
    </location>
</feature>
<feature type="modified residue" description="Phosphoserine" evidence="34">
    <location>
        <position position="314"/>
    </location>
</feature>
<feature type="modified residue" description="Phosphothreonine" evidence="28 31">
    <location>
        <position position="316"/>
    </location>
</feature>
<feature type="modified residue" description="Phosphoserine; by AMPK" evidence="28">
    <location>
        <position position="322"/>
    </location>
</feature>
<feature type="modified residue" description="Phosphoserine" evidence="2">
    <location>
        <position position="323"/>
    </location>
</feature>
<feature type="modified residue" description="Phosphoserine" evidence="2">
    <location>
        <position position="325"/>
    </location>
</feature>
<feature type="sequence variant" id="VAR_048929" description="In dbSNP:rs10415373.">
    <original>A</original>
    <variation>T</variation>
    <location>
        <position position="104"/>
    </location>
</feature>
<feature type="sequence variant" id="VAR_048930" description="In dbSNP:rs34345197.">
    <original>Q</original>
    <variation>H</variation>
    <location>
        <position position="140"/>
    </location>
</feature>
<feature type="mutagenesis site" description="Promotes F-actin assembly; when associated with A-239 and A-278. Interferes with F-actin assembly; when associated with A-239 and E-278." evidence="17">
    <original>S</original>
    <variation>A</variation>
    <location>
        <position position="157"/>
    </location>
</feature>
<feature type="mutagenesis site" description="Promotes F-actin assembly; when associated with A-157 and A-278. Interferes with F-actin assembly; when associated with A-157 and E-278." evidence="17">
    <original>S</original>
    <variation>A</variation>
    <location>
        <position position="239"/>
    </location>
</feature>
<feature type="mutagenesis site" description="Promotes F-actin assembly; when associated with A-157 and A-239." evidence="17">
    <original>T</original>
    <variation>A</variation>
    <location>
        <position position="278"/>
    </location>
</feature>
<feature type="mutagenesis site" description="Interferes with F-actin assembly; when associated with A-157 and A-239." evidence="17">
    <original>T</original>
    <variation>E</variation>
    <location>
        <position position="278"/>
    </location>
</feature>
<feature type="mutagenesis site" description="Lower stability of tetramerization domain." evidence="13">
    <original>F</original>
    <variation>A</variation>
    <location>
        <position position="370"/>
    </location>
</feature>
<feature type="mutagenesis site" description="No change in stability of tetramerization domain." evidence="13">
    <original>F</original>
    <variation>I</variation>
    <variation>K</variation>
    <location>
        <position position="370"/>
    </location>
</feature>
<feature type="sequence conflict" description="In Ref. 5; AAH26019." evidence="26" ref="5">
    <original>S</original>
    <variation>SS</variation>
    <location>
        <position position="2"/>
    </location>
</feature>
<feature type="sequence conflict" description="In Ref. 5; AAH26019." evidence="26" ref="5">
    <location>
        <position position="241"/>
    </location>
</feature>
<feature type="strand" evidence="35">
    <location>
        <begin position="5"/>
        <end position="12"/>
    </location>
</feature>
<feature type="strand" evidence="35">
    <location>
        <begin position="14"/>
        <end position="16"/>
    </location>
</feature>
<feature type="turn" evidence="35">
    <location>
        <begin position="18"/>
        <end position="20"/>
    </location>
</feature>
<feature type="strand" evidence="35">
    <location>
        <begin position="25"/>
        <end position="27"/>
    </location>
</feature>
<feature type="strand" evidence="35">
    <location>
        <begin position="34"/>
        <end position="41"/>
    </location>
</feature>
<feature type="turn" evidence="35">
    <location>
        <begin position="42"/>
        <end position="45"/>
    </location>
</feature>
<feature type="strand" evidence="35">
    <location>
        <begin position="46"/>
        <end position="55"/>
    </location>
</feature>
<feature type="strand" evidence="35">
    <location>
        <begin position="60"/>
        <end position="66"/>
    </location>
</feature>
<feature type="strand" evidence="35">
    <location>
        <begin position="79"/>
        <end position="86"/>
    </location>
</feature>
<feature type="strand" evidence="35">
    <location>
        <begin position="88"/>
        <end position="95"/>
    </location>
</feature>
<feature type="helix" evidence="35">
    <location>
        <begin position="96"/>
        <end position="114"/>
    </location>
</feature>
<feature type="helix" evidence="37">
    <location>
        <begin position="226"/>
        <end position="231"/>
    </location>
</feature>
<feature type="helix" evidence="36">
    <location>
        <begin position="341"/>
        <end position="376"/>
    </location>
</feature>
<accession>P50552</accession>
<accession>B2RBT9</accession>
<accession>Q6PIZ1</accession>
<accession>Q93035</accession>
<sequence>MSETVICSSRATVMLYDDGNKRWLPAGTGPQAFSRVQIYHNPTANSFRVVGRKMQPDQQVVINCAIVRGVKYNQATPNFHQWRDARQVWGLNFGSKEDAAQFAAGMASALEALEGGGPPPPPALPTWSVPNGPSPEEVEQQKRQQPGPSEHIERRVSNAGGPPAPPAGGPPPPPGPPPPPGPPPPPGLPPSGVPAAAHGAGGGPPPAPPLPAAQGPGGGGAGAPGLAAAIAGAKLRKVSKQEEASGGPTAPKAESGRSGGGGLMEEMNAMLARRRKATQVGEKTPKDESANQEEPEARVPAQSESVRRPWEKNSTTLPRMKSSSSVTTSETQPCTPSSSDYSDLQRVKQELLEEVKKELQKVKEEIIEAFVQELRKRGSP</sequence>
<organism>
    <name type="scientific">Homo sapiens</name>
    <name type="common">Human</name>
    <dbReference type="NCBI Taxonomy" id="9606"/>
    <lineage>
        <taxon>Eukaryota</taxon>
        <taxon>Metazoa</taxon>
        <taxon>Chordata</taxon>
        <taxon>Craniata</taxon>
        <taxon>Vertebrata</taxon>
        <taxon>Euteleostomi</taxon>
        <taxon>Mammalia</taxon>
        <taxon>Eutheria</taxon>
        <taxon>Euarchontoglires</taxon>
        <taxon>Primates</taxon>
        <taxon>Haplorrhini</taxon>
        <taxon>Catarrhini</taxon>
        <taxon>Hominidae</taxon>
        <taxon>Homo</taxon>
    </lineage>
</organism>
<name>VASP_HUMAN</name>
<dbReference type="EMBL" id="Z46389">
    <property type="protein sequence ID" value="CAA86523.1"/>
    <property type="molecule type" value="mRNA"/>
</dbReference>
<dbReference type="EMBL" id="CH471126">
    <property type="protein sequence ID" value="EAW57362.1"/>
    <property type="molecule type" value="Genomic_DNA"/>
</dbReference>
<dbReference type="EMBL" id="AK314812">
    <property type="protein sequence ID" value="BAG37336.1"/>
    <property type="molecule type" value="mRNA"/>
</dbReference>
<dbReference type="EMBL" id="BC026019">
    <property type="protein sequence ID" value="AAH26019.1"/>
    <property type="molecule type" value="mRNA"/>
</dbReference>
<dbReference type="EMBL" id="BC038224">
    <property type="protein sequence ID" value="AAH38224.1"/>
    <property type="molecule type" value="mRNA"/>
</dbReference>
<dbReference type="EMBL" id="X98534">
    <property type="protein sequence ID" value="CAA67147.2"/>
    <property type="molecule type" value="Genomic_DNA"/>
</dbReference>
<dbReference type="EMBL" id="X98533">
    <property type="protein sequence ID" value="CAA67147.2"/>
    <property type="status" value="JOINED"/>
    <property type="molecule type" value="Genomic_DNA"/>
</dbReference>
<dbReference type="CCDS" id="CCDS33051.1"/>
<dbReference type="PIR" id="S51797">
    <property type="entry name" value="S51797"/>
</dbReference>
<dbReference type="RefSeq" id="NP_003361.1">
    <property type="nucleotide sequence ID" value="NM_003370.4"/>
</dbReference>
<dbReference type="PDB" id="1EGX">
    <property type="method" value="NMR"/>
    <property type="chains" value="A=1-115"/>
</dbReference>
<dbReference type="PDB" id="1USD">
    <property type="method" value="X-ray"/>
    <property type="resolution" value="1.70 A"/>
    <property type="chains" value="A=336-380"/>
</dbReference>
<dbReference type="PDB" id="1USE">
    <property type="method" value="X-ray"/>
    <property type="resolution" value="1.30 A"/>
    <property type="chains" value="A=336-380"/>
</dbReference>
<dbReference type="PDB" id="2PAV">
    <property type="method" value="X-ray"/>
    <property type="resolution" value="1.80 A"/>
    <property type="chains" value="V=199-214"/>
</dbReference>
<dbReference type="PDB" id="2PBD">
    <property type="method" value="X-ray"/>
    <property type="resolution" value="1.50 A"/>
    <property type="chains" value="V=203-245"/>
</dbReference>
<dbReference type="PDB" id="3CHW">
    <property type="method" value="X-ray"/>
    <property type="resolution" value="2.30 A"/>
    <property type="chains" value="V=199-214"/>
</dbReference>
<dbReference type="PDB" id="8GAT">
    <property type="method" value="EM"/>
    <property type="resolution" value="3.00 A"/>
    <property type="chains" value="A=337-375"/>
</dbReference>
<dbReference type="PDB" id="8GAU">
    <property type="method" value="EM"/>
    <property type="resolution" value="3.60 A"/>
    <property type="chains" value="A=337-375"/>
</dbReference>
<dbReference type="PDBsum" id="1EGX"/>
<dbReference type="PDBsum" id="1USD"/>
<dbReference type="PDBsum" id="1USE"/>
<dbReference type="PDBsum" id="2PAV"/>
<dbReference type="PDBsum" id="2PBD"/>
<dbReference type="PDBsum" id="3CHW"/>
<dbReference type="PDBsum" id="8GAT"/>
<dbReference type="PDBsum" id="8GAU"/>
<dbReference type="BMRB" id="P50552"/>
<dbReference type="SMR" id="P50552"/>
<dbReference type="BioGRID" id="113251">
    <property type="interactions" value="323"/>
</dbReference>
<dbReference type="CORUM" id="P50552"/>
<dbReference type="DIP" id="DIP-44105N"/>
<dbReference type="ELM" id="P50552"/>
<dbReference type="FunCoup" id="P50552">
    <property type="interactions" value="1049"/>
</dbReference>
<dbReference type="IntAct" id="P50552">
    <property type="interactions" value="89"/>
</dbReference>
<dbReference type="MINT" id="P50552"/>
<dbReference type="STRING" id="9606.ENSP00000245932"/>
<dbReference type="ChEMBL" id="CHEMBL4295774"/>
<dbReference type="MoonDB" id="P50552">
    <property type="type" value="Predicted"/>
</dbReference>
<dbReference type="GlyGen" id="P50552">
    <property type="glycosylation" value="3 sites, 1 N-linked glycan (1 site), 1 O-linked glycan (1 site)"/>
</dbReference>
<dbReference type="iPTMnet" id="P50552"/>
<dbReference type="MetOSite" id="P50552"/>
<dbReference type="PhosphoSitePlus" id="P50552"/>
<dbReference type="SwissPalm" id="P50552"/>
<dbReference type="BioMuta" id="VASP"/>
<dbReference type="DMDM" id="1718079"/>
<dbReference type="OGP" id="P50552"/>
<dbReference type="jPOST" id="P50552"/>
<dbReference type="MassIVE" id="P50552"/>
<dbReference type="PaxDb" id="9606-ENSP00000245932"/>
<dbReference type="PeptideAtlas" id="P50552"/>
<dbReference type="ProteomicsDB" id="56248"/>
<dbReference type="Pumba" id="P50552"/>
<dbReference type="TopDownProteomics" id="P50552"/>
<dbReference type="Antibodypedia" id="1491">
    <property type="antibodies" value="1138 antibodies from 46 providers"/>
</dbReference>
<dbReference type="DNASU" id="7408"/>
<dbReference type="Ensembl" id="ENST00000245932.11">
    <property type="protein sequence ID" value="ENSP00000245932.5"/>
    <property type="gene ID" value="ENSG00000125753.15"/>
</dbReference>
<dbReference type="GeneID" id="7408"/>
<dbReference type="KEGG" id="hsa:7408"/>
<dbReference type="MANE-Select" id="ENST00000245932.11">
    <property type="protein sequence ID" value="ENSP00000245932.5"/>
    <property type="RefSeq nucleotide sequence ID" value="NM_003370.4"/>
    <property type="RefSeq protein sequence ID" value="NP_003361.1"/>
</dbReference>
<dbReference type="UCSC" id="uc002pcg.4">
    <property type="organism name" value="human"/>
</dbReference>
<dbReference type="AGR" id="HGNC:12652"/>
<dbReference type="CTD" id="7408"/>
<dbReference type="DisGeNET" id="7408"/>
<dbReference type="GeneCards" id="VASP"/>
<dbReference type="HGNC" id="HGNC:12652">
    <property type="gene designation" value="VASP"/>
</dbReference>
<dbReference type="HPA" id="ENSG00000125753">
    <property type="expression patterns" value="Low tissue specificity"/>
</dbReference>
<dbReference type="MIM" id="601703">
    <property type="type" value="gene"/>
</dbReference>
<dbReference type="neXtProt" id="NX_P50552"/>
<dbReference type="OpenTargets" id="ENSG00000125753"/>
<dbReference type="PharmGKB" id="PA37276"/>
<dbReference type="VEuPathDB" id="HostDB:ENSG00000125753"/>
<dbReference type="eggNOG" id="KOG4590">
    <property type="taxonomic scope" value="Eukaryota"/>
</dbReference>
<dbReference type="GeneTree" id="ENSGT00940000156765"/>
<dbReference type="HOGENOM" id="CLU_017790_0_0_1"/>
<dbReference type="InParanoid" id="P50552"/>
<dbReference type="OMA" id="TSEAHPC"/>
<dbReference type="OrthoDB" id="31170at2759"/>
<dbReference type="PAN-GO" id="P50552">
    <property type="GO annotations" value="6 GO annotations based on evolutionary models"/>
</dbReference>
<dbReference type="PhylomeDB" id="P50552"/>
<dbReference type="TreeFam" id="TF321411"/>
<dbReference type="PathwayCommons" id="P50552"/>
<dbReference type="Reactome" id="R-HSA-202433">
    <property type="pathway name" value="Generation of second messenger molecules"/>
</dbReference>
<dbReference type="Reactome" id="R-HSA-376176">
    <property type="pathway name" value="Signaling by ROBO receptors"/>
</dbReference>
<dbReference type="Reactome" id="R-HSA-446353">
    <property type="pathway name" value="Cell-extracellular matrix interactions"/>
</dbReference>
<dbReference type="SignaLink" id="P50552"/>
<dbReference type="SIGNOR" id="P50552"/>
<dbReference type="BioGRID-ORCS" id="7408">
    <property type="hits" value="13 hits in 1150 CRISPR screens"/>
</dbReference>
<dbReference type="CD-CODE" id="DEE660B4">
    <property type="entry name" value="Stress granule"/>
</dbReference>
<dbReference type="ChiTaRS" id="VASP">
    <property type="organism name" value="human"/>
</dbReference>
<dbReference type="EvolutionaryTrace" id="P50552"/>
<dbReference type="GeneWiki" id="Vasodilator-stimulated_phosphoprotein"/>
<dbReference type="GenomeRNAi" id="7408"/>
<dbReference type="Pharos" id="P50552">
    <property type="development level" value="Tbio"/>
</dbReference>
<dbReference type="PRO" id="PR:P50552"/>
<dbReference type="Proteomes" id="UP000005640">
    <property type="component" value="Chromosome 19"/>
</dbReference>
<dbReference type="RNAct" id="P50552">
    <property type="molecule type" value="protein"/>
</dbReference>
<dbReference type="Bgee" id="ENSG00000125753">
    <property type="expression patterns" value="Expressed in granulocyte and 176 other cell types or tissues"/>
</dbReference>
<dbReference type="ExpressionAtlas" id="P50552">
    <property type="expression patterns" value="baseline and differential"/>
</dbReference>
<dbReference type="GO" id="GO:0015629">
    <property type="term" value="C:actin cytoskeleton"/>
    <property type="evidence" value="ECO:0000304"/>
    <property type="project" value="ProtInc"/>
</dbReference>
<dbReference type="GO" id="GO:0005923">
    <property type="term" value="C:bicellular tight junction"/>
    <property type="evidence" value="ECO:0007669"/>
    <property type="project" value="UniProtKB-SubCell"/>
</dbReference>
<dbReference type="GO" id="GO:0005829">
    <property type="term" value="C:cytosol"/>
    <property type="evidence" value="ECO:0000314"/>
    <property type="project" value="HPA"/>
</dbReference>
<dbReference type="GO" id="GO:0070062">
    <property type="term" value="C:extracellular exosome"/>
    <property type="evidence" value="ECO:0007005"/>
    <property type="project" value="UniProtKB"/>
</dbReference>
<dbReference type="GO" id="GO:0031527">
    <property type="term" value="C:filopodium membrane"/>
    <property type="evidence" value="ECO:0007669"/>
    <property type="project" value="UniProtKB-SubCell"/>
</dbReference>
<dbReference type="GO" id="GO:0005925">
    <property type="term" value="C:focal adhesion"/>
    <property type="evidence" value="ECO:0000314"/>
    <property type="project" value="HPA"/>
</dbReference>
<dbReference type="GO" id="GO:0098978">
    <property type="term" value="C:glutamatergic synapse"/>
    <property type="evidence" value="ECO:0007669"/>
    <property type="project" value="Ensembl"/>
</dbReference>
<dbReference type="GO" id="GO:0031258">
    <property type="term" value="C:lamellipodium membrane"/>
    <property type="evidence" value="ECO:0007669"/>
    <property type="project" value="UniProtKB-SubCell"/>
</dbReference>
<dbReference type="GO" id="GO:0005886">
    <property type="term" value="C:plasma membrane"/>
    <property type="evidence" value="ECO:0000314"/>
    <property type="project" value="HPA"/>
</dbReference>
<dbReference type="GO" id="GO:0098794">
    <property type="term" value="C:postsynapse"/>
    <property type="evidence" value="ECO:0007669"/>
    <property type="project" value="Ensembl"/>
</dbReference>
<dbReference type="GO" id="GO:0003779">
    <property type="term" value="F:actin binding"/>
    <property type="evidence" value="ECO:0007669"/>
    <property type="project" value="UniProtKB-KW"/>
</dbReference>
<dbReference type="GO" id="GO:0045296">
    <property type="term" value="F:cadherin binding"/>
    <property type="evidence" value="ECO:0007005"/>
    <property type="project" value="BHF-UCL"/>
</dbReference>
<dbReference type="GO" id="GO:0005522">
    <property type="term" value="F:profilin binding"/>
    <property type="evidence" value="ECO:0000353"/>
    <property type="project" value="UniProtKB"/>
</dbReference>
<dbReference type="GO" id="GO:0017124">
    <property type="term" value="F:SH3 domain binding"/>
    <property type="evidence" value="ECO:0007669"/>
    <property type="project" value="UniProtKB-KW"/>
</dbReference>
<dbReference type="GO" id="GO:0008154">
    <property type="term" value="P:actin polymerization or depolymerization"/>
    <property type="evidence" value="ECO:0000318"/>
    <property type="project" value="GO_Central"/>
</dbReference>
<dbReference type="GO" id="GO:0007411">
    <property type="term" value="P:axon guidance"/>
    <property type="evidence" value="ECO:0000318"/>
    <property type="project" value="GO_Central"/>
</dbReference>
<dbReference type="GO" id="GO:0001843">
    <property type="term" value="P:neural tube closure"/>
    <property type="evidence" value="ECO:0000318"/>
    <property type="project" value="GO_Central"/>
</dbReference>
<dbReference type="GO" id="GO:0030838">
    <property type="term" value="P:positive regulation of actin filament polymerization"/>
    <property type="evidence" value="ECO:0000314"/>
    <property type="project" value="UniProtKB"/>
</dbReference>
<dbReference type="GO" id="GO:0051289">
    <property type="term" value="P:protein homotetramerization"/>
    <property type="evidence" value="ECO:0007669"/>
    <property type="project" value="InterPro"/>
</dbReference>
<dbReference type="CDD" id="cd01207">
    <property type="entry name" value="EVH1_Ena_VASP-like"/>
    <property type="match status" value="1"/>
</dbReference>
<dbReference type="CDD" id="cd22185">
    <property type="entry name" value="WH2_hVASP-like"/>
    <property type="match status" value="1"/>
</dbReference>
<dbReference type="FunFam" id="1.20.5.1160:FF:000005">
    <property type="entry name" value="vasodilator-stimulated phosphoprotein isoform X2"/>
    <property type="match status" value="1"/>
</dbReference>
<dbReference type="FunFam" id="2.30.29.30:FF:000047">
    <property type="entry name" value="vasodilator-stimulated phosphoprotein isoform X2"/>
    <property type="match status" value="1"/>
</dbReference>
<dbReference type="Gene3D" id="2.30.29.30">
    <property type="entry name" value="Pleckstrin-homology domain (PH domain)/Phosphotyrosine-binding domain (PTB)"/>
    <property type="match status" value="1"/>
</dbReference>
<dbReference type="Gene3D" id="1.20.5.1160">
    <property type="entry name" value="Vasodilator-stimulated phosphoprotein"/>
    <property type="match status" value="1"/>
</dbReference>
<dbReference type="InterPro" id="IPR011993">
    <property type="entry name" value="PH-like_dom_sf"/>
</dbReference>
<dbReference type="InterPro" id="IPR017354">
    <property type="entry name" value="VASP/EVL"/>
</dbReference>
<dbReference type="InterPro" id="IPR038023">
    <property type="entry name" value="VASP_sf"/>
</dbReference>
<dbReference type="InterPro" id="IPR014885">
    <property type="entry name" value="VASP_tetra"/>
</dbReference>
<dbReference type="InterPro" id="IPR000697">
    <property type="entry name" value="WH1/EVH1_dom"/>
</dbReference>
<dbReference type="PANTHER" id="PTHR11202">
    <property type="entry name" value="SPROUTY-RELATED, EVH1 DOMAIN-CONTAINING PROTEIN FAMILY MEMBER"/>
    <property type="match status" value="1"/>
</dbReference>
<dbReference type="PANTHER" id="PTHR11202:SF12">
    <property type="entry name" value="VASODILATOR-STIMULATED PHOSPHOPROTEIN"/>
    <property type="match status" value="1"/>
</dbReference>
<dbReference type="Pfam" id="PF08776">
    <property type="entry name" value="VASP_tetra"/>
    <property type="match status" value="1"/>
</dbReference>
<dbReference type="Pfam" id="PF00568">
    <property type="entry name" value="WH1"/>
    <property type="match status" value="1"/>
</dbReference>
<dbReference type="PIRSF" id="PIRSF038010">
    <property type="entry name" value="Vasodilator_Phospo"/>
    <property type="match status" value="1"/>
</dbReference>
<dbReference type="SMART" id="SM00461">
    <property type="entry name" value="WH1"/>
    <property type="match status" value="1"/>
</dbReference>
<dbReference type="SUPFAM" id="SSF50729">
    <property type="entry name" value="PH domain-like"/>
    <property type="match status" value="1"/>
</dbReference>
<dbReference type="SUPFAM" id="SSF118370">
    <property type="entry name" value="Vasodilator-stimulated phosphoprotein, VASP, tetramerisation domain"/>
    <property type="match status" value="1"/>
</dbReference>
<dbReference type="PROSITE" id="PS50229">
    <property type="entry name" value="WH1"/>
    <property type="match status" value="1"/>
</dbReference>
<keyword id="KW-0002">3D-structure</keyword>
<keyword id="KW-0007">Acetylation</keyword>
<keyword id="KW-0009">Actin-binding</keyword>
<keyword id="KW-0965">Cell junction</keyword>
<keyword id="KW-1003">Cell membrane</keyword>
<keyword id="KW-0966">Cell projection</keyword>
<keyword id="KW-0175">Coiled coil</keyword>
<keyword id="KW-0963">Cytoplasm</keyword>
<keyword id="KW-0206">Cytoskeleton</keyword>
<keyword id="KW-0903">Direct protein sequencing</keyword>
<keyword id="KW-0472">Membrane</keyword>
<keyword id="KW-0597">Phosphoprotein</keyword>
<keyword id="KW-1267">Proteomics identification</keyword>
<keyword id="KW-1185">Reference proteome</keyword>
<keyword id="KW-0677">Repeat</keyword>
<keyword id="KW-0729">SH3-binding</keyword>
<keyword id="KW-0796">Tight junction</keyword>
<gene>
    <name type="primary">VASP</name>
</gene>
<comment type="function">
    <text evidence="6 7 14 17 19">Ena/VASP proteins are actin-associated proteins involved in a range of processes dependent on cytoskeleton remodeling and cell polarity such as axon guidance, lamellipodial and filopodial dynamics, platelet activation and cell migration. VASP promotes actin filament elongation. It protects the barbed end of growing actin filaments against capping and increases the rate of actin polymerization in the presence of capping protein. VASP stimulates actin filament elongation by promoting the transfer of profilin-bound actin monomers onto the barbed end of growing actin filaments. Plays a role in actin-based mobility of Listeria monocytogenes in host cells. Regulates actin dynamics in platelets and plays an important role in regulating platelet aggregation.</text>
</comment>
<comment type="subunit">
    <text evidence="1 6 8 9 12 16 18 20 21 22">Homotetramer. Interacts with PFN1, PFN2, LPP, ACTN1 and ACTG1. Interacts, via the EVH1 domain, with the Pro-rich regions of ZYX. This interaction is important for targeting to focal adhesions and the formation of actin-rich structures at the apical surface of cells. Interacts, via the EVH1 domain, with the Pro-rich domain of Listeria monocytogenes actA. Interacts with APBB1IP. Interacts, via the Pro-rich domain, with the C-terminal SH3 domain of DNMBP (By similarity). Interacts weakly with MEFV.</text>
</comment>
<comment type="interaction">
    <interactant intactId="EBI-748201">
        <id>P50552</id>
    </interactant>
    <interactant intactId="EBI-11743294">
        <id>Q8IZP0-5</id>
        <label>ABI1</label>
    </interactant>
    <organismsDiffer>false</organismsDiffer>
    <experiments>3</experiments>
</comment>
<comment type="interaction">
    <interactant intactId="EBI-748201">
        <id>P50552</id>
    </interactant>
    <interactant intactId="EBI-743598">
        <id>Q9NYB9</id>
        <label>ABI2</label>
    </interactant>
    <organismsDiffer>false</organismsDiffer>
    <experiments>5</experiments>
</comment>
<comment type="interaction">
    <interactant intactId="EBI-748201">
        <id>P50552</id>
    </interactant>
    <interactant intactId="EBI-742038">
        <id>Q9P2A4</id>
        <label>ABI3</label>
    </interactant>
    <organismsDiffer>false</organismsDiffer>
    <experiments>9</experiments>
</comment>
<comment type="interaction">
    <interactant intactId="EBI-748201">
        <id>P50552</id>
    </interactant>
    <interactant intactId="EBI-6174091">
        <id>Q9UQB8-4</id>
        <label>BAIAP2</label>
    </interactant>
    <organismsDiffer>false</organismsDiffer>
    <experiments>6</experiments>
</comment>
<comment type="interaction">
    <interactant intactId="EBI-748201">
        <id>P50552</id>
    </interactant>
    <interactant intactId="EBI-1266334">
        <id>O95684</id>
        <label>CEP43</label>
    </interactant>
    <organismsDiffer>false</organismsDiffer>
    <experiments>5</experiments>
</comment>
<comment type="interaction">
    <interactant intactId="EBI-748201">
        <id>P50552</id>
    </interactant>
    <interactant intactId="EBI-1055805">
        <id>Q96CS3</id>
        <label>FAF2</label>
    </interactant>
    <organismsDiffer>false</organismsDiffer>
    <experiments>2</experiments>
</comment>
<comment type="interaction">
    <interactant intactId="EBI-748201">
        <id>P50552</id>
    </interactant>
    <interactant intactId="EBI-351896">
        <id>P11142</id>
        <label>HSPA8</label>
    </interactant>
    <organismsDiffer>false</organismsDiffer>
    <experiments>2</experiments>
</comment>
<comment type="interaction">
    <interactant intactId="EBI-748201">
        <id>P50552</id>
    </interactant>
    <interactant intactId="EBI-721550">
        <id>P22736</id>
        <label>NR4A1</label>
    </interactant>
    <organismsDiffer>false</organismsDiffer>
    <experiments>2</experiments>
</comment>
<comment type="interaction">
    <interactant intactId="EBI-748201">
        <id>P50552</id>
    </interactant>
    <interactant intactId="EBI-2947053">
        <id>Q92636</id>
        <label>NSMAF</label>
    </interactant>
    <organismsDiffer>false</organismsDiffer>
    <experiments>2</experiments>
</comment>
<comment type="interaction">
    <interactant intactId="EBI-748201">
        <id>P50552</id>
    </interactant>
    <interactant intactId="EBI-713780">
        <id>P07737</id>
        <label>PFN1</label>
    </interactant>
    <organismsDiffer>false</organismsDiffer>
    <experiments>2</experiments>
</comment>
<comment type="interaction">
    <interactant intactId="EBI-748201">
        <id>P50552</id>
    </interactant>
    <interactant intactId="EBI-11974061">
        <id>Q9UIG4</id>
        <label>PSORS1C2</label>
    </interactant>
    <organismsDiffer>false</organismsDiffer>
    <experiments>4</experiments>
</comment>
<comment type="interaction">
    <interactant intactId="EBI-748201">
        <id>P50552</id>
    </interactant>
    <interactant intactId="EBI-963034">
        <id>Q15418</id>
        <label>RPS6KA1</label>
    </interactant>
    <organismsDiffer>false</organismsDiffer>
    <experiments>4</experiments>
</comment>
<comment type="interaction">
    <interactant intactId="EBI-748201">
        <id>P50552</id>
    </interactant>
    <interactant intactId="EBI-9058786">
        <id>Q13296</id>
        <label>SCGB2A2</label>
    </interactant>
    <organismsDiffer>false</organismsDiffer>
    <experiments>3</experiments>
</comment>
<comment type="interaction">
    <interactant intactId="EBI-748201">
        <id>P50552</id>
    </interactant>
    <interactant intactId="EBI-720828">
        <id>Q9C026</id>
        <label>TRIM9</label>
    </interactant>
    <organismsDiffer>false</organismsDiffer>
    <experiments>4</experiments>
</comment>
<comment type="interaction">
    <interactant intactId="EBI-748201">
        <id>P50552</id>
    </interactant>
    <interactant intactId="EBI-7851194">
        <id>Q702N8</id>
        <label>XIRP1</label>
    </interactant>
    <organismsDiffer>false</organismsDiffer>
    <experiments>5</experiments>
</comment>
<comment type="interaction">
    <interactant intactId="EBI-748201">
        <id>P50552</id>
    </interactant>
    <interactant intactId="EBI-444225">
        <id>Q15942</id>
        <label>ZYX</label>
    </interactant>
    <organismsDiffer>false</organismsDiffer>
    <experiments>5</experiments>
</comment>
<comment type="interaction">
    <interactant intactId="EBI-748201">
        <id>P50552</id>
    </interactant>
    <interactant intactId="EBI-1039563">
        <id>P12003</id>
        <label>VCL</label>
    </interactant>
    <organismsDiffer>true</organismsDiffer>
    <experiments>2</experiments>
</comment>
<comment type="interaction">
    <interactant intactId="EBI-748201">
        <id>P50552</id>
    </interactant>
    <interactant intactId="EBI-2849107">
        <id>Q9RI12</id>
        <label>ypkA</label>
    </interactant>
    <organismsDiffer>true</organismsDiffer>
    <experiments>4</experiments>
</comment>
<comment type="subcellular location">
    <subcellularLocation>
        <location>Cytoplasm</location>
    </subcellularLocation>
    <subcellularLocation>
        <location>Cytoplasm</location>
        <location>Cytoskeleton</location>
    </subcellularLocation>
    <subcellularLocation>
        <location>Cell junction</location>
        <location>Focal adhesion</location>
    </subcellularLocation>
    <subcellularLocation>
        <location evidence="1">Cell junction</location>
        <location evidence="1">Tight junction</location>
    </subcellularLocation>
    <subcellularLocation>
        <location>Cell projection</location>
        <location>Lamellipodium membrane</location>
    </subcellularLocation>
    <subcellularLocation>
        <location>Cell projection</location>
        <location>Filopodium membrane</location>
    </subcellularLocation>
    <text>Targeted to stress fibers and focal adhesions through interaction with a number of proteins including MRL family members. Localizes to the plasma membrane in protruding lamellipodia and filopodial tips. Stimulation by thrombin or PMA, also translocates VASP to focal adhesions. Localized along the sides of actin filaments throughout the peripheral cytoplasm under basal conditions. In pre-apoptotic cells, colocalizes with MEFV in large specks (pyroptosomes).</text>
</comment>
<comment type="tissue specificity">
    <text evidence="23">Highly expressed in platelets.</text>
</comment>
<comment type="domain">
    <text>The EVH2 domain is comprised of 3 regions. Block A is a thymosin-like domain required for G-actin binding. The KLKR motif within this block is essential for the G-actin binding and for actin polymerization. Block B is required for F-actin binding and subcellular location, and Block C for tetramerization.</text>
</comment>
<comment type="domain">
    <text>The WH1 domain mediates interaction with XIRP1.</text>
</comment>
<comment type="PTM">
    <text evidence="11 15 17 19 24 25">Major substrate for cAMP-dependent (PKA) and cGMP-dependent protein kinase (PKG) in platelets. The preferred site for PKA is Ser-157, the preferred site for PKG/PRKG1, Ser-239. In ADP-activated platelets, phosphorylation by PKA or PKG on Ser-157 leads to fibrinogen receptor inhibition. Phosphorylation on Thr-278 requires prior phosphorylation on Ser-157 and Ser-239. In response to phorbol ester (PMA) stimulation, phosphorylated by PKC/PRKCA. In response to thrombin, phosphorylated by both PKC and ROCK1. Phosphorylation at Thr-278 by AMPK does not require prior phosphorylation at Ser-157 or Ser-239. Phosphorylation at Ser-157 by PKA is required for localization to the tight junctions in epithelial cells. Phosphorylation modulates F-actin binding, actin filament elongation and platelet activation. Phosphorylation at Ser-322 by AMPK also alters actin filament binding. Carbon monoxide (CO) promotes phosphorylation at Ser-157, while nitric oxide (NO) promotes phosphorylation at Ser-157, but also at Ser-239. Response to NO and CO is blunted in platelets from diabetic patients, and VASP is not phosphorylated efficiently at Ser-157 and Ser-239.</text>
</comment>
<comment type="miscellaneous">
    <text>VASP phosphorylation is used to monitor the effect of so-called antiplatelet drugs that reduce platelet reactivity and are used to prevent stent thrombosis, strokes and heart attacks in patients at risk for these problems.</text>
</comment>
<comment type="similarity">
    <text evidence="26">Belongs to the Ena/VASP family.</text>
</comment>